<dbReference type="EC" id="1.3.7.7" evidence="1"/>
<dbReference type="EMBL" id="CP001337">
    <property type="protein sequence ID" value="ACL26320.1"/>
    <property type="molecule type" value="Genomic_DNA"/>
</dbReference>
<dbReference type="RefSeq" id="WP_015942167.1">
    <property type="nucleotide sequence ID" value="NC_011831.1"/>
</dbReference>
<dbReference type="SMR" id="B8G945"/>
<dbReference type="STRING" id="326427.Cagg_3480"/>
<dbReference type="KEGG" id="cag:Cagg_3480"/>
<dbReference type="eggNOG" id="COG2710">
    <property type="taxonomic scope" value="Bacteria"/>
</dbReference>
<dbReference type="HOGENOM" id="CLU_025470_0_0_0"/>
<dbReference type="OrthoDB" id="495776at2"/>
<dbReference type="UniPathway" id="UPA00671"/>
<dbReference type="Proteomes" id="UP000002508">
    <property type="component" value="Chromosome"/>
</dbReference>
<dbReference type="GO" id="GO:0051539">
    <property type="term" value="F:4 iron, 4 sulfur cluster binding"/>
    <property type="evidence" value="ECO:0007669"/>
    <property type="project" value="UniProtKB-UniRule"/>
</dbReference>
<dbReference type="GO" id="GO:0005524">
    <property type="term" value="F:ATP binding"/>
    <property type="evidence" value="ECO:0007669"/>
    <property type="project" value="UniProtKB-UniRule"/>
</dbReference>
<dbReference type="GO" id="GO:0046872">
    <property type="term" value="F:metal ion binding"/>
    <property type="evidence" value="ECO:0007669"/>
    <property type="project" value="UniProtKB-KW"/>
</dbReference>
<dbReference type="GO" id="GO:0016730">
    <property type="term" value="F:oxidoreductase activity, acting on iron-sulfur proteins as donors"/>
    <property type="evidence" value="ECO:0007669"/>
    <property type="project" value="InterPro"/>
</dbReference>
<dbReference type="GO" id="GO:0016636">
    <property type="term" value="F:oxidoreductase activity, acting on the CH-CH group of donors, iron-sulfur protein as acceptor"/>
    <property type="evidence" value="ECO:0007669"/>
    <property type="project" value="UniProtKB-UniRule"/>
</dbReference>
<dbReference type="GO" id="GO:0036070">
    <property type="term" value="P:light-independent bacteriochlorophyll biosynthetic process"/>
    <property type="evidence" value="ECO:0007669"/>
    <property type="project" value="UniProtKB-UniRule"/>
</dbReference>
<dbReference type="GO" id="GO:0019685">
    <property type="term" value="P:photosynthesis, dark reaction"/>
    <property type="evidence" value="ECO:0007669"/>
    <property type="project" value="InterPro"/>
</dbReference>
<dbReference type="CDD" id="cd01981">
    <property type="entry name" value="Pchlide_reductase_B"/>
    <property type="match status" value="1"/>
</dbReference>
<dbReference type="Gene3D" id="1.20.89.20">
    <property type="match status" value="1"/>
</dbReference>
<dbReference type="Gene3D" id="3.40.50.1980">
    <property type="entry name" value="Nitrogenase molybdenum iron protein domain"/>
    <property type="match status" value="3"/>
</dbReference>
<dbReference type="Gene3D" id="1.10.8.550">
    <property type="entry name" value="Proto-chlorophyllide reductase 57 kD subunit B"/>
    <property type="match status" value="1"/>
</dbReference>
<dbReference type="HAMAP" id="MF_00353">
    <property type="entry name" value="ChlB_BchB"/>
    <property type="match status" value="1"/>
</dbReference>
<dbReference type="InterPro" id="IPR050152">
    <property type="entry name" value="ChlB/BchB/BchZ"/>
</dbReference>
<dbReference type="InterPro" id="IPR013580">
    <property type="entry name" value="LI-POR_suB-like_C"/>
</dbReference>
<dbReference type="InterPro" id="IPR000510">
    <property type="entry name" value="Nase/OxRdtase_comp1"/>
</dbReference>
<dbReference type="InterPro" id="IPR042298">
    <property type="entry name" value="P-CP_red_C"/>
</dbReference>
<dbReference type="InterPro" id="IPR005969">
    <property type="entry name" value="Protochl_reductB"/>
</dbReference>
<dbReference type="InterPro" id="IPR016209">
    <property type="entry name" value="Protochlorophyllide_Rdtase"/>
</dbReference>
<dbReference type="NCBIfam" id="TIGR01278">
    <property type="entry name" value="DPOR_BchB"/>
    <property type="match status" value="1"/>
</dbReference>
<dbReference type="NCBIfam" id="NF002789">
    <property type="entry name" value="PRK02910.1-3"/>
    <property type="match status" value="1"/>
</dbReference>
<dbReference type="PANTHER" id="PTHR33712">
    <property type="entry name" value="LIGHT-INDEPENDENT PROTOCHLOROPHYLLIDE REDUCTASE SUBUNIT B"/>
    <property type="match status" value="1"/>
</dbReference>
<dbReference type="PANTHER" id="PTHR33712:SF7">
    <property type="entry name" value="LIGHT-INDEPENDENT PROTOCHLOROPHYLLIDE REDUCTASE SUBUNIT B"/>
    <property type="match status" value="1"/>
</dbReference>
<dbReference type="Pfam" id="PF00148">
    <property type="entry name" value="Oxidored_nitro"/>
    <property type="match status" value="1"/>
</dbReference>
<dbReference type="Pfam" id="PF08369">
    <property type="entry name" value="PCP_red"/>
    <property type="match status" value="1"/>
</dbReference>
<dbReference type="PIRSF" id="PIRSF000163">
    <property type="entry name" value="PCP_ChlB"/>
    <property type="match status" value="1"/>
</dbReference>
<dbReference type="SUPFAM" id="SSF53807">
    <property type="entry name" value="Helical backbone' metal receptor"/>
    <property type="match status" value="1"/>
</dbReference>
<reference key="1">
    <citation type="submission" date="2008-12" db="EMBL/GenBank/DDBJ databases">
        <title>Complete sequence of Chloroflexus aggregans DSM 9485.</title>
        <authorList>
            <consortium name="US DOE Joint Genome Institute"/>
            <person name="Lucas S."/>
            <person name="Copeland A."/>
            <person name="Lapidus A."/>
            <person name="Glavina del Rio T."/>
            <person name="Dalin E."/>
            <person name="Tice H."/>
            <person name="Pitluck S."/>
            <person name="Foster B."/>
            <person name="Larimer F."/>
            <person name="Land M."/>
            <person name="Hauser L."/>
            <person name="Kyrpides N."/>
            <person name="Mikhailova N."/>
            <person name="Bryant D.A."/>
            <person name="Richardson P."/>
        </authorList>
    </citation>
    <scope>NUCLEOTIDE SEQUENCE [LARGE SCALE GENOMIC DNA]</scope>
    <source>
        <strain>MD-66 / DSM 9485</strain>
    </source>
</reference>
<name>BCHB_CHLAD</name>
<organism>
    <name type="scientific">Chloroflexus aggregans (strain MD-66 / DSM 9485)</name>
    <dbReference type="NCBI Taxonomy" id="326427"/>
    <lineage>
        <taxon>Bacteria</taxon>
        <taxon>Bacillati</taxon>
        <taxon>Chloroflexota</taxon>
        <taxon>Chloroflexia</taxon>
        <taxon>Chloroflexales</taxon>
        <taxon>Chloroflexineae</taxon>
        <taxon>Chloroflexaceae</taxon>
        <taxon>Chloroflexus</taxon>
    </lineage>
</organism>
<proteinExistence type="inferred from homology"/>
<comment type="function">
    <text evidence="1">Component of the dark-operative protochlorophyllide reductase (DPOR) that uses Mg-ATP and reduced ferredoxin to reduce ring D of protochlorophyllide (Pchlide) to form chlorophyllide a (Chlide). This reaction is light-independent. The NB-protein (BchN-BchB) is the catalytic component of the complex.</text>
</comment>
<comment type="catalytic activity">
    <reaction evidence="1">
        <text>chlorophyllide a + oxidized 2[4Fe-4S]-[ferredoxin] + 2 ADP + 2 phosphate = protochlorophyllide a + reduced 2[4Fe-4S]-[ferredoxin] + 2 ATP + 2 H2O</text>
        <dbReference type="Rhea" id="RHEA:28202"/>
        <dbReference type="Rhea" id="RHEA-COMP:10002"/>
        <dbReference type="Rhea" id="RHEA-COMP:10004"/>
        <dbReference type="ChEBI" id="CHEBI:15377"/>
        <dbReference type="ChEBI" id="CHEBI:30616"/>
        <dbReference type="ChEBI" id="CHEBI:33722"/>
        <dbReference type="ChEBI" id="CHEBI:33723"/>
        <dbReference type="ChEBI" id="CHEBI:43474"/>
        <dbReference type="ChEBI" id="CHEBI:83348"/>
        <dbReference type="ChEBI" id="CHEBI:83350"/>
        <dbReference type="ChEBI" id="CHEBI:456216"/>
        <dbReference type="EC" id="1.3.7.7"/>
    </reaction>
</comment>
<comment type="cofactor">
    <cofactor evidence="1">
        <name>[4Fe-4S] cluster</name>
        <dbReference type="ChEBI" id="CHEBI:49883"/>
    </cofactor>
    <text evidence="1">Binds 1 [4Fe-4S] cluster per heterodimer. The cluster is bound at the heterodimer interface by residues from both subunits.</text>
</comment>
<comment type="pathway">
    <text evidence="1">Porphyrin-containing compound metabolism; bacteriochlorophyll biosynthesis (light-independent).</text>
</comment>
<comment type="subunit">
    <text evidence="1">Protochlorophyllide reductase is composed of three subunits; BchL, BchN and BchB. Forms a heterotetramer of two BchB and two BchN subunits.</text>
</comment>
<comment type="similarity">
    <text evidence="1">Belongs to the ChlB/BchB/BchZ family.</text>
</comment>
<sequence>MRLAYWMYEGTAHHGVGRIANSMRNVHAVFHAPQGDDYVNAIFAMLERSPNFPAMTTSVVSGTDLARGTIRLPDTLKQVEERVHPDLIIVVASCSTILLQENLEIAAQHAGLQCEVMVYDANPYRMQEIVAAESLFTDLVKRFAKPQPRTERPTVNILGPASLGFHARHDLISLRRMLKTLGVEINVVAPWGASIADLRRLPAAWLTIAPYRELGLRAATYLEEQFGVPALLDAPIGVQPTLRWIERLRELLAQAGADIPMPPLTAFSLDGLSAPSAVPWLARTADMDSFSGKPAFVFGDATHVVGVTRFLHDELGMPIAGAGTYVKHQADWVREQLAGYVDEVLVTDEFQTVAARIAALRPELVCGTQMERHTSRRYDLNCMVISPPTHIENHLLAYRPFLGFDGADVIADEVYTTCTLGMEKHLIDLFGDAGLELPEKAKNGSAQAVEPAPAAVTVESPKPEQEPAVATVAVSGPTPAVAAPPAPAAPVDPVWAADAEAMLKKVPFFVRGRVRGNVERYARQHGHAVITAQVLLAAKEELGA</sequence>
<gene>
    <name evidence="1" type="primary">bchB</name>
    <name type="ordered locus">Cagg_3480</name>
</gene>
<protein>
    <recommendedName>
        <fullName evidence="1">Light-independent protochlorophyllide reductase subunit B</fullName>
        <shortName evidence="1">DPOR subunit B</shortName>
        <shortName evidence="1">LI-POR subunit B</shortName>
        <ecNumber evidence="1">1.3.7.7</ecNumber>
    </recommendedName>
</protein>
<feature type="chain" id="PRO_1000133419" description="Light-independent protochlorophyllide reductase subunit B">
    <location>
        <begin position="1"/>
        <end position="544"/>
    </location>
</feature>
<feature type="active site" description="Proton donor" evidence="1">
    <location>
        <position position="286"/>
    </location>
</feature>
<feature type="binding site" evidence="1">
    <location>
        <position position="36"/>
    </location>
    <ligand>
        <name>[4Fe-4S] cluster</name>
        <dbReference type="ChEBI" id="CHEBI:49883"/>
        <note>ligand shared with heterodimeric partner</note>
    </ligand>
</feature>
<feature type="binding site" evidence="1">
    <location>
        <begin position="421"/>
        <end position="422"/>
    </location>
    <ligand>
        <name>substrate</name>
    </ligand>
</feature>
<keyword id="KW-0004">4Fe-4S</keyword>
<keyword id="KW-0067">ATP-binding</keyword>
<keyword id="KW-0077">Bacteriochlorophyll biosynthesis</keyword>
<keyword id="KW-0149">Chlorophyll biosynthesis</keyword>
<keyword id="KW-0408">Iron</keyword>
<keyword id="KW-0411">Iron-sulfur</keyword>
<keyword id="KW-0479">Metal-binding</keyword>
<keyword id="KW-0547">Nucleotide-binding</keyword>
<keyword id="KW-0560">Oxidoreductase</keyword>
<keyword id="KW-0602">Photosynthesis</keyword>
<accession>B8G945</accession>
<evidence type="ECO:0000255" key="1">
    <source>
        <dbReference type="HAMAP-Rule" id="MF_00353"/>
    </source>
</evidence>